<reference key="1">
    <citation type="submission" date="1995-06" db="EMBL/GenBank/DDBJ databases">
        <authorList>
            <person name="Ball T."/>
            <person name="Rosamond J."/>
        </authorList>
    </citation>
    <scope>NUCLEOTIDE SEQUENCE [GENOMIC DNA]</scope>
    <source>
        <strain>CA124</strain>
    </source>
</reference>
<reference key="2">
    <citation type="submission" date="1998-11" db="EMBL/GenBank/DDBJ databases">
        <title>Candida albicans strain 1161 genome pilot sequencing project.</title>
        <authorList>
            <person name="Oliver K."/>
            <person name="Harris D."/>
            <person name="Barrell B.G."/>
            <person name="Rajandream M.A."/>
        </authorList>
    </citation>
    <scope>NUCLEOTIDE SEQUENCE [LARGE SCALE GENOMIC DNA]</scope>
    <source>
        <strain>1161</strain>
    </source>
</reference>
<organism>
    <name type="scientific">Candida albicans</name>
    <name type="common">Yeast</name>
    <dbReference type="NCBI Taxonomy" id="5476"/>
    <lineage>
        <taxon>Eukaryota</taxon>
        <taxon>Fungi</taxon>
        <taxon>Dikarya</taxon>
        <taxon>Ascomycota</taxon>
        <taxon>Saccharomycotina</taxon>
        <taxon>Pichiomycetes</taxon>
        <taxon>Debaryomycetaceae</taxon>
        <taxon>Candida/Lodderomyces clade</taxon>
        <taxon>Candida</taxon>
    </lineage>
</organism>
<feature type="chain" id="PRO_0000046452" description="DNA polymerase delta catalytic subunit">
    <location>
        <begin position="1"/>
        <end position="1038"/>
    </location>
</feature>
<feature type="zinc finger region" description="CysA-type">
    <location>
        <begin position="942"/>
        <end position="961"/>
    </location>
</feature>
<feature type="region of interest" description="Disordered" evidence="2">
    <location>
        <begin position="1"/>
        <end position="29"/>
    </location>
</feature>
<feature type="short sequence motif" description="CysB motif">
    <location>
        <begin position="992"/>
        <end position="1010"/>
    </location>
</feature>
<feature type="binding site" evidence="1">
    <location>
        <position position="942"/>
    </location>
    <ligand>
        <name>Zn(2+)</name>
        <dbReference type="ChEBI" id="CHEBI:29105"/>
    </ligand>
</feature>
<feature type="binding site" evidence="1">
    <location>
        <position position="945"/>
    </location>
    <ligand>
        <name>Zn(2+)</name>
        <dbReference type="ChEBI" id="CHEBI:29105"/>
    </ligand>
</feature>
<feature type="binding site" evidence="1">
    <location>
        <position position="958"/>
    </location>
    <ligand>
        <name>Zn(2+)</name>
        <dbReference type="ChEBI" id="CHEBI:29105"/>
    </ligand>
</feature>
<feature type="binding site" evidence="1">
    <location>
        <position position="961"/>
    </location>
    <ligand>
        <name>Zn(2+)</name>
        <dbReference type="ChEBI" id="CHEBI:29105"/>
    </ligand>
</feature>
<feature type="binding site" evidence="1">
    <location>
        <position position="992"/>
    </location>
    <ligand>
        <name>[4Fe-4S] cluster</name>
        <dbReference type="ChEBI" id="CHEBI:49883"/>
    </ligand>
</feature>
<feature type="binding site" evidence="1">
    <location>
        <position position="995"/>
    </location>
    <ligand>
        <name>[4Fe-4S] cluster</name>
        <dbReference type="ChEBI" id="CHEBI:49883"/>
    </ligand>
</feature>
<feature type="binding site" evidence="1">
    <location>
        <position position="1005"/>
    </location>
    <ligand>
        <name>[4Fe-4S] cluster</name>
        <dbReference type="ChEBI" id="CHEBI:49883"/>
    </ligand>
</feature>
<feature type="binding site" evidence="1">
    <location>
        <position position="1010"/>
    </location>
    <ligand>
        <name>[4Fe-4S] cluster</name>
        <dbReference type="ChEBI" id="CHEBI:49883"/>
    </ligand>
</feature>
<feature type="sequence conflict" description="In Ref. 1; CAA61282." evidence="3" ref="1">
    <original>H</original>
    <variation>P</variation>
    <location>
        <position position="172"/>
    </location>
</feature>
<feature type="sequence conflict" description="In Ref. 1; CAA61282." evidence="3" ref="1">
    <original>R</original>
    <variation>Q</variation>
    <location>
        <position position="772"/>
    </location>
</feature>
<name>DPOD_CANAX</name>
<sequence>MSHSIPITSSPPPALKKLKLPNGSEEPSEFERELLDITQAVHDSTDQTWDRPPLPSSFEDISFQQLDAEEYHDRGNTYARFFGITQEGHSVLCNVTGFIHYFYCPVPKGFEENLTEFTNYLKATFDGIERVEITSKESIWGYSNNIKTPFFKIFAKNNISKIRSAFQNGQVHNIDPCITYDNINYLLRLMIDCKITGMSWITLPRDKYKIVNNKISTCQIECSIDYRDLISHPPEGEWLKMAPLRILSFDIECAGRKGVFPEAEHDPVIQIANVVQKSGESKPFVRNVFTVNTCSSIIGSQIFEHQREEDMLMHWKEFITKVDPDVIIGYNTANFDIPYVLNRAKALGLNDFPFFGRLKRVKQEIKDAVFSSRAYGTRENKVVNIDGRMQLDLLQFIQREYKLRSYTLNSVSAHFLGEQKEDVQHSIITDLQNGTKETRRRLAVYCLKDAFLPLRLLDKLMCLVNYTEMARVTGVPFSYLLSRGQQIKVISQLFRKCLQEDIVIPNLKSEGSNEEYEGATVIEPERGYYDVPIATLDFSSLYPSIMMAHNLCYTTLLNKNSIKAFGLTEDDYTKTPNGDYFVHSNLRKGILPTILDELLTARKKAKADLKKETDPFKKDVLNGRQLALKISANSVYGFTGATVGKLPCLAISSSVTAFGREMIEKTKNEVQEYYSKKNGHPYDAKVIYGDTDSVMVKFGYQDLETCMKLGEEAANYVSTKFKNPIKLEFEKVYFPYLLINKKRYAGLYWTRPEKFDKMDTKGIETVRRDNCRLVQNVITKVLEFILEERDVPKAQRFVKQTIADLLQNRIDLSQLVITKAYSKHDYSAKQAHVELAERMRKRDPGSAPTLGDRVAYVIIKTGGDKNYEKSEDPLYVLENSLPIDVKYYLDQQLTKPLERIFIPILGETKTKELLTGSHTRTIKVAAPKTGGLLRFAKKSEVCVSCRTPLKKDNLGALCPNCIKDGKGPDLYGNALSQMNYLENKFSRLWTECQRCQGSLHQEVLCSNKDCPIFYMRTKAQKDVHQQALELVKWDNTNW</sequence>
<dbReference type="EC" id="2.7.7.7"/>
<dbReference type="EMBL" id="X88804">
    <property type="protein sequence ID" value="CAA61282.1"/>
    <property type="molecule type" value="Genomic_DNA"/>
</dbReference>
<dbReference type="EMBL" id="AL033396">
    <property type="protein sequence ID" value="CAA21949.1"/>
    <property type="molecule type" value="Genomic_DNA"/>
</dbReference>
<dbReference type="PIR" id="JC5757">
    <property type="entry name" value="JC5757"/>
</dbReference>
<dbReference type="PIR" id="T18222">
    <property type="entry name" value="T18222"/>
</dbReference>
<dbReference type="SMR" id="P46588"/>
<dbReference type="EnsemblFungi" id="C7_02790C_A-T">
    <property type="protein sequence ID" value="C7_02790C_A-T-p1"/>
    <property type="gene ID" value="C7_02790C_A"/>
</dbReference>
<dbReference type="CGD" id="CAL0000185849">
    <property type="gene designation" value="POL3"/>
</dbReference>
<dbReference type="VEuPathDB" id="FungiDB:C7_02790C_A"/>
<dbReference type="VEuPathDB" id="FungiDB:CAWG_05613"/>
<dbReference type="PhylomeDB" id="P46588"/>
<dbReference type="GO" id="GO:0043625">
    <property type="term" value="C:delta DNA polymerase complex"/>
    <property type="evidence" value="ECO:0007669"/>
    <property type="project" value="EnsemblFungi"/>
</dbReference>
<dbReference type="GO" id="GO:0008296">
    <property type="term" value="F:3'-5'-DNA exonuclease activity"/>
    <property type="evidence" value="ECO:0007669"/>
    <property type="project" value="EnsemblFungi"/>
</dbReference>
<dbReference type="GO" id="GO:0051539">
    <property type="term" value="F:4 iron, 4 sulfur cluster binding"/>
    <property type="evidence" value="ECO:0007669"/>
    <property type="project" value="UniProtKB-KW"/>
</dbReference>
<dbReference type="GO" id="GO:0003677">
    <property type="term" value="F:DNA binding"/>
    <property type="evidence" value="ECO:0007669"/>
    <property type="project" value="UniProtKB-KW"/>
</dbReference>
<dbReference type="GO" id="GO:0003887">
    <property type="term" value="F:DNA-directed DNA polymerase activity"/>
    <property type="evidence" value="ECO:0000316"/>
    <property type="project" value="CGD"/>
</dbReference>
<dbReference type="GO" id="GO:0060090">
    <property type="term" value="F:molecular adaptor activity"/>
    <property type="evidence" value="ECO:0007669"/>
    <property type="project" value="EnsemblFungi"/>
</dbReference>
<dbReference type="GO" id="GO:0000166">
    <property type="term" value="F:nucleotide binding"/>
    <property type="evidence" value="ECO:0007669"/>
    <property type="project" value="InterPro"/>
</dbReference>
<dbReference type="GO" id="GO:0008270">
    <property type="term" value="F:zinc ion binding"/>
    <property type="evidence" value="ECO:0007669"/>
    <property type="project" value="UniProtKB-KW"/>
</dbReference>
<dbReference type="GO" id="GO:0006287">
    <property type="term" value="P:base-excision repair, gap-filling"/>
    <property type="evidence" value="ECO:0007669"/>
    <property type="project" value="TreeGrafter"/>
</dbReference>
<dbReference type="GO" id="GO:0045004">
    <property type="term" value="P:DNA replication proofreading"/>
    <property type="evidence" value="ECO:0007669"/>
    <property type="project" value="EnsemblFungi"/>
</dbReference>
<dbReference type="GO" id="GO:0043137">
    <property type="term" value="P:DNA replication, removal of RNA primer"/>
    <property type="evidence" value="ECO:0007669"/>
    <property type="project" value="EnsemblFungi"/>
</dbReference>
<dbReference type="GO" id="GO:0006303">
    <property type="term" value="P:double-strand break repair via nonhomologous end joining"/>
    <property type="evidence" value="ECO:0007669"/>
    <property type="project" value="EnsemblFungi"/>
</dbReference>
<dbReference type="GO" id="GO:0006297">
    <property type="term" value="P:nucleotide-excision repair, DNA gap filling"/>
    <property type="evidence" value="ECO:0007669"/>
    <property type="project" value="TreeGrafter"/>
</dbReference>
<dbReference type="GO" id="GO:0006278">
    <property type="term" value="P:RNA-templated DNA biosynthetic process"/>
    <property type="evidence" value="ECO:0007669"/>
    <property type="project" value="EnsemblFungi"/>
</dbReference>
<dbReference type="CDD" id="cd05777">
    <property type="entry name" value="DNA_polB_delta_exo"/>
    <property type="match status" value="1"/>
</dbReference>
<dbReference type="CDD" id="cd05533">
    <property type="entry name" value="POLBc_delta"/>
    <property type="match status" value="1"/>
</dbReference>
<dbReference type="FunFam" id="1.10.132.60:FF:000001">
    <property type="entry name" value="DNA polymerase"/>
    <property type="match status" value="1"/>
</dbReference>
<dbReference type="FunFam" id="1.10.287.690:FF:000001">
    <property type="entry name" value="DNA polymerase"/>
    <property type="match status" value="1"/>
</dbReference>
<dbReference type="FunFam" id="2.40.50.730:FF:000004">
    <property type="entry name" value="DNA polymerase"/>
    <property type="match status" value="1"/>
</dbReference>
<dbReference type="FunFam" id="2.40.50.730:FF:000006">
    <property type="entry name" value="DNA polymerase"/>
    <property type="match status" value="1"/>
</dbReference>
<dbReference type="FunFam" id="3.30.420.10:FF:000351">
    <property type="entry name" value="DNA polymerase"/>
    <property type="match status" value="1"/>
</dbReference>
<dbReference type="Gene3D" id="2.40.50.730">
    <property type="match status" value="2"/>
</dbReference>
<dbReference type="Gene3D" id="1.10.132.60">
    <property type="entry name" value="DNA polymerase family B, C-terminal domain"/>
    <property type="match status" value="1"/>
</dbReference>
<dbReference type="Gene3D" id="1.10.287.690">
    <property type="entry name" value="Helix hairpin bin"/>
    <property type="match status" value="1"/>
</dbReference>
<dbReference type="Gene3D" id="3.90.1600.10">
    <property type="entry name" value="Palm domain of DNA polymerase"/>
    <property type="match status" value="1"/>
</dbReference>
<dbReference type="Gene3D" id="3.30.420.10">
    <property type="entry name" value="Ribonuclease H-like superfamily/Ribonuclease H"/>
    <property type="match status" value="1"/>
</dbReference>
<dbReference type="InterPro" id="IPR006172">
    <property type="entry name" value="DNA-dir_DNA_pol_B"/>
</dbReference>
<dbReference type="InterPro" id="IPR017964">
    <property type="entry name" value="DNA-dir_DNA_pol_B_CS"/>
</dbReference>
<dbReference type="InterPro" id="IPR006133">
    <property type="entry name" value="DNA-dir_DNA_pol_B_exonuc"/>
</dbReference>
<dbReference type="InterPro" id="IPR006134">
    <property type="entry name" value="DNA-dir_DNA_pol_B_multi_dom"/>
</dbReference>
<dbReference type="InterPro" id="IPR043502">
    <property type="entry name" value="DNA/RNA_pol_sf"/>
</dbReference>
<dbReference type="InterPro" id="IPR042087">
    <property type="entry name" value="DNA_pol_B_thumb"/>
</dbReference>
<dbReference type="InterPro" id="IPR023211">
    <property type="entry name" value="DNA_pol_palm_dom_sf"/>
</dbReference>
<dbReference type="InterPro" id="IPR050240">
    <property type="entry name" value="DNA_pol_type-B"/>
</dbReference>
<dbReference type="InterPro" id="IPR012337">
    <property type="entry name" value="RNaseH-like_sf"/>
</dbReference>
<dbReference type="InterPro" id="IPR036397">
    <property type="entry name" value="RNaseH_sf"/>
</dbReference>
<dbReference type="InterPro" id="IPR025687">
    <property type="entry name" value="Znf-C4pol"/>
</dbReference>
<dbReference type="NCBIfam" id="TIGR00592">
    <property type="entry name" value="pol2"/>
    <property type="match status" value="1"/>
</dbReference>
<dbReference type="PANTHER" id="PTHR10322">
    <property type="entry name" value="DNA POLYMERASE CATALYTIC SUBUNIT"/>
    <property type="match status" value="1"/>
</dbReference>
<dbReference type="PANTHER" id="PTHR10322:SF23">
    <property type="entry name" value="DNA POLYMERASE DELTA CATALYTIC SUBUNIT"/>
    <property type="match status" value="1"/>
</dbReference>
<dbReference type="Pfam" id="PF00136">
    <property type="entry name" value="DNA_pol_B"/>
    <property type="match status" value="1"/>
</dbReference>
<dbReference type="Pfam" id="PF03104">
    <property type="entry name" value="DNA_pol_B_exo1"/>
    <property type="match status" value="1"/>
</dbReference>
<dbReference type="Pfam" id="PF14260">
    <property type="entry name" value="zf-C4pol"/>
    <property type="match status" value="1"/>
</dbReference>
<dbReference type="PRINTS" id="PR00106">
    <property type="entry name" value="DNAPOLB"/>
</dbReference>
<dbReference type="SMART" id="SM00486">
    <property type="entry name" value="POLBc"/>
    <property type="match status" value="1"/>
</dbReference>
<dbReference type="SUPFAM" id="SSF56672">
    <property type="entry name" value="DNA/RNA polymerases"/>
    <property type="match status" value="1"/>
</dbReference>
<dbReference type="SUPFAM" id="SSF53098">
    <property type="entry name" value="Ribonuclease H-like"/>
    <property type="match status" value="1"/>
</dbReference>
<dbReference type="PROSITE" id="PS00116">
    <property type="entry name" value="DNA_POLYMERASE_B"/>
    <property type="match status" value="1"/>
</dbReference>
<keyword id="KW-0004">4Fe-4S</keyword>
<keyword id="KW-0235">DNA replication</keyword>
<keyword id="KW-0238">DNA-binding</keyword>
<keyword id="KW-0239">DNA-directed DNA polymerase</keyword>
<keyword id="KW-0269">Exonuclease</keyword>
<keyword id="KW-0378">Hydrolase</keyword>
<keyword id="KW-0408">Iron</keyword>
<keyword id="KW-0411">Iron-sulfur</keyword>
<keyword id="KW-0479">Metal-binding</keyword>
<keyword id="KW-0540">Nuclease</keyword>
<keyword id="KW-0548">Nucleotidyltransferase</keyword>
<keyword id="KW-0539">Nucleus</keyword>
<keyword id="KW-0808">Transferase</keyword>
<keyword id="KW-0862">Zinc</keyword>
<keyword id="KW-0863">Zinc-finger</keyword>
<protein>
    <recommendedName>
        <fullName>DNA polymerase delta catalytic subunit</fullName>
        <ecNumber>2.7.7.7</ecNumber>
    </recommendedName>
    <alternativeName>
        <fullName>DNA polymerase III</fullName>
    </alternativeName>
</protein>
<comment type="function">
    <text>This polymerase possesses two enzymatic activities: DNA synthesis (polymerase) and an exonucleolytic activity that degrades single-stranded DNA in the 3'- to 5'-direction.</text>
</comment>
<comment type="catalytic activity">
    <reaction>
        <text>DNA(n) + a 2'-deoxyribonucleoside 5'-triphosphate = DNA(n+1) + diphosphate</text>
        <dbReference type="Rhea" id="RHEA:22508"/>
        <dbReference type="Rhea" id="RHEA-COMP:17339"/>
        <dbReference type="Rhea" id="RHEA-COMP:17340"/>
        <dbReference type="ChEBI" id="CHEBI:33019"/>
        <dbReference type="ChEBI" id="CHEBI:61560"/>
        <dbReference type="ChEBI" id="CHEBI:173112"/>
        <dbReference type="EC" id="2.7.7.7"/>
    </reaction>
</comment>
<comment type="cofactor">
    <cofactor evidence="1">
        <name>[4Fe-4S] cluster</name>
        <dbReference type="ChEBI" id="CHEBI:49883"/>
    </cofactor>
    <text evidence="1">Binds 1 [4Fe-4S] cluster.</text>
</comment>
<comment type="subunit">
    <text>Heterodimer with subunits of 125 kDa and 50 kDa. The 125 kDa subunit contains the polymerase active site and most likely the active site for the 3'-5' exonuclease activity.</text>
</comment>
<comment type="subcellular location">
    <subcellularLocation>
        <location>Nucleus</location>
    </subcellularLocation>
</comment>
<comment type="domain">
    <text evidence="1">The CysB motif binds 1 4Fe-4S cluster and is required for the formation of polymerase complexes.</text>
</comment>
<comment type="miscellaneous">
    <text>In eukaryotes there are five DNA polymerases: alpha, beta, gamma, delta, and epsilon which are responsible for different reactions of DNA synthesis.</text>
</comment>
<comment type="similarity">
    <text evidence="3">Belongs to the DNA polymerase type-B family.</text>
</comment>
<accession>P46588</accession>
<accession>Q9URM0</accession>
<gene>
    <name type="primary">POL3</name>
    <name type="ORF">Ca35A5.06c</name>
</gene>
<proteinExistence type="inferred from homology"/>
<evidence type="ECO:0000250" key="1"/>
<evidence type="ECO:0000256" key="2">
    <source>
        <dbReference type="SAM" id="MobiDB-lite"/>
    </source>
</evidence>
<evidence type="ECO:0000305" key="3"/>